<proteinExistence type="inferred from homology"/>
<organism>
    <name type="scientific">Caenorhabditis elegans</name>
    <dbReference type="NCBI Taxonomy" id="6239"/>
    <lineage>
        <taxon>Eukaryota</taxon>
        <taxon>Metazoa</taxon>
        <taxon>Ecdysozoa</taxon>
        <taxon>Nematoda</taxon>
        <taxon>Chromadorea</taxon>
        <taxon>Rhabditida</taxon>
        <taxon>Rhabditina</taxon>
        <taxon>Rhabditomorpha</taxon>
        <taxon>Rhabditoidea</taxon>
        <taxon>Rhabditidae</taxon>
        <taxon>Peloderinae</taxon>
        <taxon>Caenorhabditis</taxon>
    </lineage>
</organism>
<protein>
    <recommendedName>
        <fullName>Echinoderm microtubule-associated protein-like elp-1</fullName>
    </recommendedName>
</protein>
<dbReference type="EMBL" id="Z92833">
    <property type="protein sequence ID" value="CAB07379.1"/>
    <property type="molecule type" value="Genomic_DNA"/>
</dbReference>
<dbReference type="PIR" id="T21942">
    <property type="entry name" value="T21942"/>
</dbReference>
<dbReference type="RefSeq" id="NP_001256950.1">
    <property type="nucleotide sequence ID" value="NM_001270021.4"/>
</dbReference>
<dbReference type="SMR" id="O45487"/>
<dbReference type="FunCoup" id="O45487">
    <property type="interactions" value="920"/>
</dbReference>
<dbReference type="STRING" id="6239.F38A6.2a.2"/>
<dbReference type="PaxDb" id="6239-F38A6.2a"/>
<dbReference type="EnsemblMetazoa" id="F38A6.2a.1">
    <property type="protein sequence ID" value="F38A6.2a.1"/>
    <property type="gene ID" value="WBGene00001248"/>
</dbReference>
<dbReference type="GeneID" id="180358"/>
<dbReference type="KEGG" id="cel:CELE_F38A6.2"/>
<dbReference type="UCSC" id="F38A6.2">
    <property type="organism name" value="c. elegans"/>
</dbReference>
<dbReference type="AGR" id="WB:WBGene00001248"/>
<dbReference type="CTD" id="180358"/>
<dbReference type="WormBase" id="F38A6.2a">
    <property type="protein sequence ID" value="CE15999"/>
    <property type="gene ID" value="WBGene00001248"/>
    <property type="gene designation" value="elp-1"/>
</dbReference>
<dbReference type="eggNOG" id="KOG2106">
    <property type="taxonomic scope" value="Eukaryota"/>
</dbReference>
<dbReference type="HOGENOM" id="CLU_011754_2_0_1"/>
<dbReference type="InParanoid" id="O45487"/>
<dbReference type="OMA" id="DIQWFTH"/>
<dbReference type="OrthoDB" id="47802at2759"/>
<dbReference type="PhylomeDB" id="O45487"/>
<dbReference type="Reactome" id="R-CEL-9648025">
    <property type="pathway name" value="EML4 and NUDC in mitotic spindle formation"/>
</dbReference>
<dbReference type="PRO" id="PR:O45487"/>
<dbReference type="Proteomes" id="UP000001940">
    <property type="component" value="Chromosome V"/>
</dbReference>
<dbReference type="Bgee" id="WBGene00001248">
    <property type="expression patterns" value="Expressed in larva and 3 other cell types or tissues"/>
</dbReference>
<dbReference type="ExpressionAtlas" id="O45487">
    <property type="expression patterns" value="baseline and differential"/>
</dbReference>
<dbReference type="GO" id="GO:0005737">
    <property type="term" value="C:cytoplasm"/>
    <property type="evidence" value="ECO:0007669"/>
    <property type="project" value="UniProtKB-KW"/>
</dbReference>
<dbReference type="GO" id="GO:0030425">
    <property type="term" value="C:dendrite"/>
    <property type="evidence" value="ECO:0000314"/>
    <property type="project" value="WormBase"/>
</dbReference>
<dbReference type="GO" id="GO:0005874">
    <property type="term" value="C:microtubule"/>
    <property type="evidence" value="ECO:0007669"/>
    <property type="project" value="UniProtKB-KW"/>
</dbReference>
<dbReference type="GO" id="GO:0031594">
    <property type="term" value="C:neuromuscular junction"/>
    <property type="evidence" value="ECO:0000314"/>
    <property type="project" value="WormBase"/>
</dbReference>
<dbReference type="GO" id="GO:0043025">
    <property type="term" value="C:neuronal cell body"/>
    <property type="evidence" value="ECO:0000314"/>
    <property type="project" value="WormBase"/>
</dbReference>
<dbReference type="GO" id="GO:0008017">
    <property type="term" value="F:microtubule binding"/>
    <property type="evidence" value="ECO:0000318"/>
    <property type="project" value="GO_Central"/>
</dbReference>
<dbReference type="GO" id="GO:0000226">
    <property type="term" value="P:microtubule cytoskeleton organization"/>
    <property type="evidence" value="ECO:0000318"/>
    <property type="project" value="GO_Central"/>
</dbReference>
<dbReference type="CDD" id="cd21931">
    <property type="entry name" value="TD_EMAP-like"/>
    <property type="match status" value="1"/>
</dbReference>
<dbReference type="FunFam" id="2.130.10.10:FF:002318">
    <property type="entry name" value="Echinoderm microtubule-associated protein-like elp-1"/>
    <property type="match status" value="1"/>
</dbReference>
<dbReference type="Gene3D" id="2.130.10.10">
    <property type="entry name" value="YVTN repeat-like/Quinoprotein amine dehydrogenase"/>
    <property type="match status" value="2"/>
</dbReference>
<dbReference type="InterPro" id="IPR055442">
    <property type="entry name" value="Beta-prop_EML-like_2nd"/>
</dbReference>
<dbReference type="InterPro" id="IPR055439">
    <property type="entry name" value="Beta-prop_EML_1st"/>
</dbReference>
<dbReference type="InterPro" id="IPR049813">
    <property type="entry name" value="Elp-1-like_TD"/>
</dbReference>
<dbReference type="InterPro" id="IPR005108">
    <property type="entry name" value="HELP"/>
</dbReference>
<dbReference type="InterPro" id="IPR011047">
    <property type="entry name" value="Quinoprotein_ADH-like_sf"/>
</dbReference>
<dbReference type="InterPro" id="IPR015943">
    <property type="entry name" value="WD40/YVTN_repeat-like_dom_sf"/>
</dbReference>
<dbReference type="InterPro" id="IPR001680">
    <property type="entry name" value="WD40_rpt"/>
</dbReference>
<dbReference type="InterPro" id="IPR050630">
    <property type="entry name" value="WD_repeat_EMAP"/>
</dbReference>
<dbReference type="PANTHER" id="PTHR13720:SF50">
    <property type="entry name" value="ECHINODERM MICROTUBULE-ASSOCIATED PROTEIN-LIKE 2"/>
    <property type="match status" value="1"/>
</dbReference>
<dbReference type="PANTHER" id="PTHR13720">
    <property type="entry name" value="WD-40 REPEAT PROTEIN"/>
    <property type="match status" value="1"/>
</dbReference>
<dbReference type="Pfam" id="PF23409">
    <property type="entry name" value="Beta-prop_EML"/>
    <property type="match status" value="1"/>
</dbReference>
<dbReference type="Pfam" id="PF23414">
    <property type="entry name" value="Beta-prop_EML_2"/>
    <property type="match status" value="1"/>
</dbReference>
<dbReference type="Pfam" id="PF03451">
    <property type="entry name" value="HELP"/>
    <property type="match status" value="1"/>
</dbReference>
<dbReference type="SMART" id="SM00320">
    <property type="entry name" value="WD40"/>
    <property type="match status" value="9"/>
</dbReference>
<dbReference type="SUPFAM" id="SSF50998">
    <property type="entry name" value="Quinoprotein alcohol dehydrogenase-like"/>
    <property type="match status" value="1"/>
</dbReference>
<dbReference type="PROSITE" id="PS50082">
    <property type="entry name" value="WD_REPEATS_2"/>
    <property type="match status" value="1"/>
</dbReference>
<dbReference type="PROSITE" id="PS50294">
    <property type="entry name" value="WD_REPEATS_REGION"/>
    <property type="match status" value="2"/>
</dbReference>
<name>EMAL_CAEEL</name>
<keyword id="KW-0963">Cytoplasm</keyword>
<keyword id="KW-0206">Cytoskeleton</keyword>
<keyword id="KW-0493">Microtubule</keyword>
<keyword id="KW-1185">Reference proteome</keyword>
<keyword id="KW-0677">Repeat</keyword>
<keyword id="KW-0853">WD repeat</keyword>
<gene>
    <name type="primary">elp-1</name>
    <name type="ORF">F38A6.2</name>
</gene>
<sequence length="891" mass="98372">MSISNGWSSSSIISDVLPEEEFEEVEEDELILNENDRLKFRVDELEKIVVAQRNEILLLQSSTVEILRRLQNLEIQDQSRSPTCSGYSSLPRRISGSKSSYTMSPSHAPPRSSHANSKSLYINGMNNNSEEVSPGPPRHRPPTRGSDGMVNVSVGKSARGSPMRKWVSTHDMKDTDRFRRLSTSSEASTSATMNPIVNSVRRLSTTHRQSSPSLLSLCSVISRSPSTSSILRKNNRTCQFSNGSGHLPIFIGGKTVQVPVPTGYENMDPTMDQDPPTMKVTLKHVYSYRGKDVRSNIEMLPTGELVFFSANLVVLMNITGEDRSQRIYHGHTCDVKCITLHPNKILVASGQSSCHSVEKFQKPEHTSPIDSPEDLVRQLEMEHTEAHVRIWDTIKLTTLMVLNGFEKGICHVAFSKTDSGSLLAVVDDSLKHLMSVWNWQKGKREGEVKASNDVVFECKWHPTIRNLIVLYGKGHFSFFNYDPATGVLVKTVATFEGRDKPKTVLSMCFGENDQVVTGDSNGTISIWDPRTCKTTKQAHSVHPGGVYSLTLAKSGKILSGGKDRMVSEWDLQDLVRTRRPIELPDEKGFPRVILQNGSELIIGTSSNTLLFGNIENSTNLTSLIEGDPGNLTFLLTCSSNQLITSSQCGTLRIWNHIDKKVEFSKKFIDSVECVDVDVTNTHIILGFAAGLWIVMNITKQQTIQEKKEGTAPITAVKFAPSGATFAVATKDPHLTIYRIDASKNLLVIARIHHIPAPIVALDFSSDSQYLRGQSIGAHLLFWTKAGEICDGTSVKDVKWGSSRVKIGFETALVAHSSNGQVTAVAQCEDISACGMENGTIRIYKNPVTSVTAGFVELLGHGRIIKSVAFSNKIQLFSCSPTDNSVFEWCLE</sequence>
<evidence type="ECO:0000250" key="1"/>
<evidence type="ECO:0000256" key="2">
    <source>
        <dbReference type="SAM" id="MobiDB-lite"/>
    </source>
</evidence>
<evidence type="ECO:0000305" key="3"/>
<accession>O45487</accession>
<comment type="function">
    <text evidence="1">May modify the assembly dynamics of microtubules, such that microtubules are slightly longer, but more dynamic.</text>
</comment>
<comment type="subcellular location">
    <subcellularLocation>
        <location evidence="3">Cytoplasm</location>
        <location evidence="3">Cytoskeleton</location>
    </subcellularLocation>
</comment>
<comment type="similarity">
    <text evidence="3">Belongs to the WD repeat EMAP family.</text>
</comment>
<reference key="1">
    <citation type="journal article" date="1998" name="Science">
        <title>Genome sequence of the nematode C. elegans: a platform for investigating biology.</title>
        <authorList>
            <consortium name="The C. elegans sequencing consortium"/>
        </authorList>
    </citation>
    <scope>NUCLEOTIDE SEQUENCE [LARGE SCALE GENOMIC DNA]</scope>
    <source>
        <strain>Bristol N2</strain>
    </source>
</reference>
<feature type="chain" id="PRO_0000050966" description="Echinoderm microtubule-associated protein-like elp-1">
    <location>
        <begin position="1"/>
        <end position="891"/>
    </location>
</feature>
<feature type="repeat" description="WD 1">
    <location>
        <begin position="330"/>
        <end position="401"/>
    </location>
</feature>
<feature type="repeat" description="WD 2">
    <location>
        <begin position="404"/>
        <end position="447"/>
    </location>
</feature>
<feature type="repeat" description="WD 3">
    <location>
        <begin position="499"/>
        <end position="537"/>
    </location>
</feature>
<feature type="repeat" description="WD 4">
    <location>
        <begin position="541"/>
        <end position="579"/>
    </location>
</feature>
<feature type="repeat" description="WD 5">
    <location>
        <begin position="626"/>
        <end position="664"/>
    </location>
</feature>
<feature type="repeat" description="WD 6">
    <location>
        <begin position="708"/>
        <end position="747"/>
    </location>
</feature>
<feature type="repeat" description="WD 7">
    <location>
        <begin position="753"/>
        <end position="792"/>
    </location>
</feature>
<feature type="repeat" description="WD 8">
    <location>
        <begin position="816"/>
        <end position="853"/>
    </location>
</feature>
<feature type="repeat" description="WD 9">
    <location>
        <begin position="859"/>
        <end position="890"/>
    </location>
</feature>
<feature type="region of interest" description="Disordered" evidence="2">
    <location>
        <begin position="77"/>
        <end position="167"/>
    </location>
</feature>
<feature type="compositionally biased region" description="Polar residues" evidence="2">
    <location>
        <begin position="77"/>
        <end position="88"/>
    </location>
</feature>
<feature type="compositionally biased region" description="Low complexity" evidence="2">
    <location>
        <begin position="104"/>
        <end position="117"/>
    </location>
</feature>
<feature type="compositionally biased region" description="Polar residues" evidence="2">
    <location>
        <begin position="118"/>
        <end position="131"/>
    </location>
</feature>